<sequence length="613" mass="69778">MGQKGHKDSLYPCGGTPESSLHEALDQCMTALDLFLTNQFSEALSYLKPRTKESMYHSLTYATILEMQAMMTFDPQDILLAGNMMKEAQMLCQRHRRKSSVTDSFSSLVNRPTLGQFTEEEIHAEVCYAECLLQRAALTFLQGSSHGGAVRPRALHDPSHACSCPPGPGRQHLFLLQDENMVSFIKGGIKVRNSYQTYKELDSLVQSSQYCKGENHPHFEGGVKLGVGAFNLTLSMLPTRILRLLEFVGFSGNKDYGLLQLEEGASGHSFRSVLCVMLLLCYHTFLTFVLGTGNVNIEEAEKLLKPYLNRYPKGAIFLFFAGRIEVIKGNIDAAIRRFEECCEAQQHWKQFHHMCYWELMWCFTYKGQWKMSYFYADLLSKENCWSKATYIYMKAAYLSMFGKEDHKPFGDDEVELFRAVPGLKLKIAGKSLPTEKFAIRKSRRYFSSNPISLPVPALEMMYIWNGYAVIGKQPKLTDGILEIITKAEEMLEKGPENEYSVDDECLVKLLKGLCLKYLGRVQEAEENFRSISANEKKIKYDHYLIPNALLELALLLMEQDRNEEAIKLLESAKQNYKNYSMESRTHFRIQAATLQAKSSLENSSRSMVSSVSL</sequence>
<reference key="1">
    <citation type="journal article" date="1997" name="DNA Res.">
        <title>Characterization of cDNA clones in size-fractionated cDNA libraries from human brain.</title>
        <authorList>
            <person name="Seki N."/>
            <person name="Ohira M."/>
            <person name="Nagase T."/>
            <person name="Ishikawa K."/>
            <person name="Miyajima N."/>
            <person name="Nakajima D."/>
            <person name="Nomura N."/>
            <person name="Ohara O."/>
        </authorList>
    </citation>
    <scope>NUCLEOTIDE SEQUENCE [LARGE SCALE MRNA] (ISOFORM 3)</scope>
    <source>
        <tissue>Brain</tissue>
    </source>
</reference>
<reference key="2">
    <citation type="journal article" date="2004" name="Nat. Genet.">
        <title>Complete sequencing and characterization of 21,243 full-length human cDNAs.</title>
        <authorList>
            <person name="Ota T."/>
            <person name="Suzuki Y."/>
            <person name="Nishikawa T."/>
            <person name="Otsuki T."/>
            <person name="Sugiyama T."/>
            <person name="Irie R."/>
            <person name="Wakamatsu A."/>
            <person name="Hayashi K."/>
            <person name="Sato H."/>
            <person name="Nagai K."/>
            <person name="Kimura K."/>
            <person name="Makita H."/>
            <person name="Sekine M."/>
            <person name="Obayashi M."/>
            <person name="Nishi T."/>
            <person name="Shibahara T."/>
            <person name="Tanaka T."/>
            <person name="Ishii S."/>
            <person name="Yamamoto J."/>
            <person name="Saito K."/>
            <person name="Kawai Y."/>
            <person name="Isono Y."/>
            <person name="Nakamura Y."/>
            <person name="Nagahari K."/>
            <person name="Murakami K."/>
            <person name="Yasuda T."/>
            <person name="Iwayanagi T."/>
            <person name="Wagatsuma M."/>
            <person name="Shiratori A."/>
            <person name="Sudo H."/>
            <person name="Hosoiri T."/>
            <person name="Kaku Y."/>
            <person name="Kodaira H."/>
            <person name="Kondo H."/>
            <person name="Sugawara M."/>
            <person name="Takahashi M."/>
            <person name="Kanda K."/>
            <person name="Yokoi T."/>
            <person name="Furuya T."/>
            <person name="Kikkawa E."/>
            <person name="Omura Y."/>
            <person name="Abe K."/>
            <person name="Kamihara K."/>
            <person name="Katsuta N."/>
            <person name="Sato K."/>
            <person name="Tanikawa M."/>
            <person name="Yamazaki M."/>
            <person name="Ninomiya K."/>
            <person name="Ishibashi T."/>
            <person name="Yamashita H."/>
            <person name="Murakawa K."/>
            <person name="Fujimori K."/>
            <person name="Tanai H."/>
            <person name="Kimata M."/>
            <person name="Watanabe M."/>
            <person name="Hiraoka S."/>
            <person name="Chiba Y."/>
            <person name="Ishida S."/>
            <person name="Ono Y."/>
            <person name="Takiguchi S."/>
            <person name="Watanabe S."/>
            <person name="Yosida M."/>
            <person name="Hotuta T."/>
            <person name="Kusano J."/>
            <person name="Kanehori K."/>
            <person name="Takahashi-Fujii A."/>
            <person name="Hara H."/>
            <person name="Tanase T.-O."/>
            <person name="Nomura Y."/>
            <person name="Togiya S."/>
            <person name="Komai F."/>
            <person name="Hara R."/>
            <person name="Takeuchi K."/>
            <person name="Arita M."/>
            <person name="Imose N."/>
            <person name="Musashino K."/>
            <person name="Yuuki H."/>
            <person name="Oshima A."/>
            <person name="Sasaki N."/>
            <person name="Aotsuka S."/>
            <person name="Yoshikawa Y."/>
            <person name="Matsunawa H."/>
            <person name="Ichihara T."/>
            <person name="Shiohata N."/>
            <person name="Sano S."/>
            <person name="Moriya S."/>
            <person name="Momiyama H."/>
            <person name="Satoh N."/>
            <person name="Takami S."/>
            <person name="Terashima Y."/>
            <person name="Suzuki O."/>
            <person name="Nakagawa S."/>
            <person name="Senoh A."/>
            <person name="Mizoguchi H."/>
            <person name="Goto Y."/>
            <person name="Shimizu F."/>
            <person name="Wakebe H."/>
            <person name="Hishigaki H."/>
            <person name="Watanabe T."/>
            <person name="Sugiyama A."/>
            <person name="Takemoto M."/>
            <person name="Kawakami B."/>
            <person name="Yamazaki M."/>
            <person name="Watanabe K."/>
            <person name="Kumagai A."/>
            <person name="Itakura S."/>
            <person name="Fukuzumi Y."/>
            <person name="Fujimori Y."/>
            <person name="Komiyama M."/>
            <person name="Tashiro H."/>
            <person name="Tanigami A."/>
            <person name="Fujiwara T."/>
            <person name="Ono T."/>
            <person name="Yamada K."/>
            <person name="Fujii Y."/>
            <person name="Ozaki K."/>
            <person name="Hirao M."/>
            <person name="Ohmori Y."/>
            <person name="Kawabata A."/>
            <person name="Hikiji T."/>
            <person name="Kobatake N."/>
            <person name="Inagaki H."/>
            <person name="Ikema Y."/>
            <person name="Okamoto S."/>
            <person name="Okitani R."/>
            <person name="Kawakami T."/>
            <person name="Noguchi S."/>
            <person name="Itoh T."/>
            <person name="Shigeta K."/>
            <person name="Senba T."/>
            <person name="Matsumura K."/>
            <person name="Nakajima Y."/>
            <person name="Mizuno T."/>
            <person name="Morinaga M."/>
            <person name="Sasaki M."/>
            <person name="Togashi T."/>
            <person name="Oyama M."/>
            <person name="Hata H."/>
            <person name="Watanabe M."/>
            <person name="Komatsu T."/>
            <person name="Mizushima-Sugano J."/>
            <person name="Satoh T."/>
            <person name="Shirai Y."/>
            <person name="Takahashi Y."/>
            <person name="Nakagawa K."/>
            <person name="Okumura K."/>
            <person name="Nagase T."/>
            <person name="Nomura N."/>
            <person name="Kikuchi H."/>
            <person name="Masuho Y."/>
            <person name="Yamashita R."/>
            <person name="Nakai K."/>
            <person name="Yada T."/>
            <person name="Nakamura Y."/>
            <person name="Ohara O."/>
            <person name="Isogai T."/>
            <person name="Sugano S."/>
        </authorList>
    </citation>
    <scope>NUCLEOTIDE SEQUENCE [LARGE SCALE MRNA] (ISOFORM 5)</scope>
    <source>
        <tissue>Mammary gland</tissue>
    </source>
</reference>
<reference key="3">
    <citation type="journal article" date="2006" name="Nature">
        <title>The DNA sequence and biological annotation of human chromosome 1.</title>
        <authorList>
            <person name="Gregory S.G."/>
            <person name="Barlow K.F."/>
            <person name="McLay K.E."/>
            <person name="Kaul R."/>
            <person name="Swarbreck D."/>
            <person name="Dunham A."/>
            <person name="Scott C.E."/>
            <person name="Howe K.L."/>
            <person name="Woodfine K."/>
            <person name="Spencer C.C.A."/>
            <person name="Jones M.C."/>
            <person name="Gillson C."/>
            <person name="Searle S."/>
            <person name="Zhou Y."/>
            <person name="Kokocinski F."/>
            <person name="McDonald L."/>
            <person name="Evans R."/>
            <person name="Phillips K."/>
            <person name="Atkinson A."/>
            <person name="Cooper R."/>
            <person name="Jones C."/>
            <person name="Hall R.E."/>
            <person name="Andrews T.D."/>
            <person name="Lloyd C."/>
            <person name="Ainscough R."/>
            <person name="Almeida J.P."/>
            <person name="Ambrose K.D."/>
            <person name="Anderson F."/>
            <person name="Andrew R.W."/>
            <person name="Ashwell R.I.S."/>
            <person name="Aubin K."/>
            <person name="Babbage A.K."/>
            <person name="Bagguley C.L."/>
            <person name="Bailey J."/>
            <person name="Beasley H."/>
            <person name="Bethel G."/>
            <person name="Bird C.P."/>
            <person name="Bray-Allen S."/>
            <person name="Brown J.Y."/>
            <person name="Brown A.J."/>
            <person name="Buckley D."/>
            <person name="Burton J."/>
            <person name="Bye J."/>
            <person name="Carder C."/>
            <person name="Chapman J.C."/>
            <person name="Clark S.Y."/>
            <person name="Clarke G."/>
            <person name="Clee C."/>
            <person name="Cobley V."/>
            <person name="Collier R.E."/>
            <person name="Corby N."/>
            <person name="Coville G.J."/>
            <person name="Davies J."/>
            <person name="Deadman R."/>
            <person name="Dunn M."/>
            <person name="Earthrowl M."/>
            <person name="Ellington A.G."/>
            <person name="Errington H."/>
            <person name="Frankish A."/>
            <person name="Frankland J."/>
            <person name="French L."/>
            <person name="Garner P."/>
            <person name="Garnett J."/>
            <person name="Gay L."/>
            <person name="Ghori M.R.J."/>
            <person name="Gibson R."/>
            <person name="Gilby L.M."/>
            <person name="Gillett W."/>
            <person name="Glithero R.J."/>
            <person name="Grafham D.V."/>
            <person name="Griffiths C."/>
            <person name="Griffiths-Jones S."/>
            <person name="Grocock R."/>
            <person name="Hammond S."/>
            <person name="Harrison E.S.I."/>
            <person name="Hart E."/>
            <person name="Haugen E."/>
            <person name="Heath P.D."/>
            <person name="Holmes S."/>
            <person name="Holt K."/>
            <person name="Howden P.J."/>
            <person name="Hunt A.R."/>
            <person name="Hunt S.E."/>
            <person name="Hunter G."/>
            <person name="Isherwood J."/>
            <person name="James R."/>
            <person name="Johnson C."/>
            <person name="Johnson D."/>
            <person name="Joy A."/>
            <person name="Kay M."/>
            <person name="Kershaw J.K."/>
            <person name="Kibukawa M."/>
            <person name="Kimberley A.M."/>
            <person name="King A."/>
            <person name="Knights A.J."/>
            <person name="Lad H."/>
            <person name="Laird G."/>
            <person name="Lawlor S."/>
            <person name="Leongamornlert D.A."/>
            <person name="Lloyd D.M."/>
            <person name="Loveland J."/>
            <person name="Lovell J."/>
            <person name="Lush M.J."/>
            <person name="Lyne R."/>
            <person name="Martin S."/>
            <person name="Mashreghi-Mohammadi M."/>
            <person name="Matthews L."/>
            <person name="Matthews N.S.W."/>
            <person name="McLaren S."/>
            <person name="Milne S."/>
            <person name="Mistry S."/>
            <person name="Moore M.J.F."/>
            <person name="Nickerson T."/>
            <person name="O'Dell C.N."/>
            <person name="Oliver K."/>
            <person name="Palmeiri A."/>
            <person name="Palmer S.A."/>
            <person name="Parker A."/>
            <person name="Patel D."/>
            <person name="Pearce A.V."/>
            <person name="Peck A.I."/>
            <person name="Pelan S."/>
            <person name="Phelps K."/>
            <person name="Phillimore B.J."/>
            <person name="Plumb R."/>
            <person name="Rajan J."/>
            <person name="Raymond C."/>
            <person name="Rouse G."/>
            <person name="Saenphimmachak C."/>
            <person name="Sehra H.K."/>
            <person name="Sheridan E."/>
            <person name="Shownkeen R."/>
            <person name="Sims S."/>
            <person name="Skuce C.D."/>
            <person name="Smith M."/>
            <person name="Steward C."/>
            <person name="Subramanian S."/>
            <person name="Sycamore N."/>
            <person name="Tracey A."/>
            <person name="Tromans A."/>
            <person name="Van Helmond Z."/>
            <person name="Wall M."/>
            <person name="Wallis J.M."/>
            <person name="White S."/>
            <person name="Whitehead S.L."/>
            <person name="Wilkinson J.E."/>
            <person name="Willey D.L."/>
            <person name="Williams H."/>
            <person name="Wilming L."/>
            <person name="Wray P.W."/>
            <person name="Wu Z."/>
            <person name="Coulson A."/>
            <person name="Vaudin M."/>
            <person name="Sulston J.E."/>
            <person name="Durbin R.M."/>
            <person name="Hubbard T."/>
            <person name="Wooster R."/>
            <person name="Dunham I."/>
            <person name="Carter N.P."/>
            <person name="McVean G."/>
            <person name="Ross M.T."/>
            <person name="Harrow J."/>
            <person name="Olson M.V."/>
            <person name="Beck S."/>
            <person name="Rogers J."/>
            <person name="Bentley D.R."/>
        </authorList>
    </citation>
    <scope>NUCLEOTIDE SEQUENCE [LARGE SCALE GENOMIC DNA]</scope>
</reference>
<reference key="4">
    <citation type="submission" date="2005-09" db="EMBL/GenBank/DDBJ databases">
        <authorList>
            <person name="Mural R.J."/>
            <person name="Istrail S."/>
            <person name="Sutton G.G."/>
            <person name="Florea L."/>
            <person name="Halpern A.L."/>
            <person name="Mobarry C.M."/>
            <person name="Lippert R."/>
            <person name="Walenz B."/>
            <person name="Shatkay H."/>
            <person name="Dew I."/>
            <person name="Miller J.R."/>
            <person name="Flanigan M.J."/>
            <person name="Edwards N.J."/>
            <person name="Bolanos R."/>
            <person name="Fasulo D."/>
            <person name="Halldorsson B.V."/>
            <person name="Hannenhalli S."/>
            <person name="Turner R."/>
            <person name="Yooseph S."/>
            <person name="Lu F."/>
            <person name="Nusskern D.R."/>
            <person name="Shue B.C."/>
            <person name="Zheng X.H."/>
            <person name="Zhong F."/>
            <person name="Delcher A.L."/>
            <person name="Huson D.H."/>
            <person name="Kravitz S.A."/>
            <person name="Mouchard L."/>
            <person name="Reinert K."/>
            <person name="Remington K.A."/>
            <person name="Clark A.G."/>
            <person name="Waterman M.S."/>
            <person name="Eichler E.E."/>
            <person name="Adams M.D."/>
            <person name="Hunkapiller M.W."/>
            <person name="Myers E.W."/>
            <person name="Venter J.C."/>
        </authorList>
    </citation>
    <scope>NUCLEOTIDE SEQUENCE [LARGE SCALE GENOMIC DNA]</scope>
</reference>
<reference key="5">
    <citation type="journal article" date="2004" name="Genome Res.">
        <title>The status, quality, and expansion of the NIH full-length cDNA project: the Mammalian Gene Collection (MGC).</title>
        <authorList>
            <consortium name="The MGC Project Team"/>
        </authorList>
    </citation>
    <scope>NUCLEOTIDE SEQUENCE [LARGE SCALE MRNA] (ISOFORMS 1 AND 2)</scope>
    <scope>NUCLEOTIDE SEQUENCE [LARGE SCALE MRNA] OF 1-320 (ISOFORM 4)</scope>
    <source>
        <tissue>Placenta</tissue>
        <tissue>Testis</tissue>
    </source>
</reference>
<reference key="6">
    <citation type="journal article" date="1998" name="Nucleic Acids Res.">
        <title>Differential screening and suppression subtractive hybridization identified genes differentially expressed in an estrogen receptor-positive breast carcinoma cell line.</title>
        <authorList>
            <person name="Kuang W.W."/>
            <person name="Thompson D.A."/>
            <person name="Hoch R.V."/>
            <person name="Weigel R.J."/>
        </authorList>
    </citation>
    <scope>NUCLEOTIDE SEQUENCE [MRNA] OF 8-613 (ISOFORM 4)</scope>
    <source>
        <tissue>Mammary carcinoma</tissue>
    </source>
</reference>
<gene>
    <name type="primary">TTC39A</name>
    <name type="synonym">C1orf34</name>
    <name type="synonym">KIAA0452</name>
</gene>
<proteinExistence type="evidence at protein level"/>
<comment type="interaction">
    <interactant intactId="EBI-12259184">
        <id>Q5SRH9-6</id>
    </interactant>
    <interactant intactId="EBI-357849">
        <id>Q15025</id>
        <label>TNIP1</label>
    </interactant>
    <organismsDiffer>false</organismsDiffer>
    <experiments>3</experiments>
</comment>
<comment type="alternative products">
    <event type="alternative splicing"/>
    <isoform>
        <id>Q5SRH9-1</id>
        <name>1</name>
        <sequence type="displayed"/>
    </isoform>
    <isoform>
        <id>Q5SRH9-2</id>
        <name>2</name>
        <sequence type="described" ref="VSP_026348"/>
    </isoform>
    <isoform>
        <id>Q5SRH9-3</id>
        <name>3</name>
        <sequence type="described" ref="VSP_026349 VSP_026352 VSP_026353"/>
    </isoform>
    <isoform>
        <id>Q5SRH9-4</id>
        <name>4</name>
        <sequence type="described" ref="VSP_026350 VSP_026351"/>
    </isoform>
    <isoform>
        <id>Q5SRH9-5</id>
        <name>5</name>
        <sequence type="described" ref="VSP_047198 VSP_026351"/>
    </isoform>
    <isoform>
        <id>Q5SRH9-6</id>
        <name>6</name>
        <sequence type="described" ref="VSP_026351"/>
    </isoform>
</comment>
<comment type="similarity">
    <text evidence="5">Belongs to the TTC39 family.</text>
</comment>
<comment type="sequence caution" evidence="5">
    <conflict type="erroneous initiation">
        <sequence resource="EMBL-CDS" id="AAH28374"/>
    </conflict>
    <text>Extended N-terminus.</text>
</comment>
<comment type="sequence caution" evidence="5">
    <conflict type="erroneous initiation">
        <sequence resource="EMBL-CDS" id="BAA32297"/>
    </conflict>
    <text>Extended N-terminus.</text>
</comment>
<comment type="sequence caution" evidence="5">
    <conflict type="frameshift">
        <sequence resource="EMBL-CDS" id="BAA32297"/>
    </conflict>
</comment>
<protein>
    <recommendedName>
        <fullName>Tetratricopeptide repeat protein 39A</fullName>
        <shortName>TPR repeat protein 39A</shortName>
    </recommendedName>
    <alternativeName>
        <fullName>Differentially expressed in MCF-7 with estradiol protein 6</fullName>
        <shortName>DEME-6</shortName>
    </alternativeName>
</protein>
<name>TT39A_HUMAN</name>
<accession>Q5SRH9</accession>
<accession>B7Z782</accession>
<accession>E7EQY9</accession>
<accession>G3XAF8</accession>
<accession>O43417</accession>
<accession>O75040</accession>
<accession>Q5SRH5</accession>
<accession>Q5SRH6</accession>
<accession>Q5SRH7</accession>
<accession>Q5SRH8</accession>
<accession>Q5SRI0</accession>
<accession>Q5SRI1</accession>
<accession>Q5SRI2</accession>
<accession>Q5T7S1</accession>
<accession>Q6PIU8</accession>
<accession>Q9BT24</accession>
<dbReference type="EMBL" id="AB007921">
    <property type="protein sequence ID" value="BAA32297.1"/>
    <property type="status" value="ALT_SEQ"/>
    <property type="molecule type" value="mRNA"/>
</dbReference>
<dbReference type="EMBL" id="AK301587">
    <property type="protein sequence ID" value="BAH13518.1"/>
    <property type="molecule type" value="mRNA"/>
</dbReference>
<dbReference type="EMBL" id="AL162430">
    <property type="status" value="NOT_ANNOTATED_CDS"/>
    <property type="molecule type" value="Genomic_DNA"/>
</dbReference>
<dbReference type="EMBL" id="AL671986">
    <property type="status" value="NOT_ANNOTATED_CDS"/>
    <property type="molecule type" value="Genomic_DNA"/>
</dbReference>
<dbReference type="EMBL" id="CH471059">
    <property type="protein sequence ID" value="EAX06826.1"/>
    <property type="molecule type" value="Genomic_DNA"/>
</dbReference>
<dbReference type="EMBL" id="BC004399">
    <property type="protein sequence ID" value="AAH04399.1"/>
    <property type="molecule type" value="mRNA"/>
</dbReference>
<dbReference type="EMBL" id="BC028374">
    <property type="protein sequence ID" value="AAH28374.1"/>
    <property type="status" value="ALT_INIT"/>
    <property type="molecule type" value="mRNA"/>
</dbReference>
<dbReference type="EMBL" id="CX788693">
    <property type="status" value="NOT_ANNOTATED_CDS"/>
    <property type="molecule type" value="mRNA"/>
</dbReference>
<dbReference type="EMBL" id="AF007170">
    <property type="protein sequence ID" value="AAC39582.1"/>
    <property type="molecule type" value="mRNA"/>
</dbReference>
<dbReference type="CCDS" id="CCDS44143.1">
    <molecule id="Q5SRH9-4"/>
</dbReference>
<dbReference type="CCDS" id="CCDS44144.1">
    <molecule id="Q5SRH9-6"/>
</dbReference>
<dbReference type="CCDS" id="CCDS72790.1">
    <molecule id="Q5SRH9-1"/>
</dbReference>
<dbReference type="CCDS" id="CCDS76162.1">
    <molecule id="Q5SRH9-2"/>
</dbReference>
<dbReference type="CCDS" id="CCDS90953.1">
    <molecule id="Q5SRH9-5"/>
</dbReference>
<dbReference type="RefSeq" id="NP_001073963.1">
    <molecule id="Q5SRH9-6"/>
    <property type="nucleotide sequence ID" value="NM_001080494.3"/>
</dbReference>
<dbReference type="RefSeq" id="NP_001138304.1">
    <molecule id="Q5SRH9-4"/>
    <property type="nucleotide sequence ID" value="NM_001144832.2"/>
</dbReference>
<dbReference type="RefSeq" id="NP_001284592.1">
    <molecule id="Q5SRH9-5"/>
    <property type="nucleotide sequence ID" value="NM_001297663.2"/>
</dbReference>
<dbReference type="RefSeq" id="NP_001284593.1">
    <property type="nucleotide sequence ID" value="NM_001297664.1"/>
</dbReference>
<dbReference type="RefSeq" id="NP_001284594.1">
    <molecule id="Q5SRH9-1"/>
    <property type="nucleotide sequence ID" value="NM_001297665.1"/>
</dbReference>
<dbReference type="RefSeq" id="NP_001284595.1">
    <molecule id="Q5SRH9-2"/>
    <property type="nucleotide sequence ID" value="NM_001297666.1"/>
</dbReference>
<dbReference type="RefSeq" id="NP_001284596.1">
    <property type="nucleotide sequence ID" value="NM_001297667.1"/>
</dbReference>
<dbReference type="SMR" id="Q5SRH9"/>
<dbReference type="BioGRID" id="116643">
    <property type="interactions" value="20"/>
</dbReference>
<dbReference type="FunCoup" id="Q5SRH9">
    <property type="interactions" value="83"/>
</dbReference>
<dbReference type="IntAct" id="Q5SRH9">
    <property type="interactions" value="9"/>
</dbReference>
<dbReference type="STRING" id="9606.ENSP00000393952"/>
<dbReference type="GlyGen" id="Q5SRH9">
    <property type="glycosylation" value="2 sites, 1 O-linked glycan (1 site)"/>
</dbReference>
<dbReference type="iPTMnet" id="Q5SRH9"/>
<dbReference type="PhosphoSitePlus" id="Q5SRH9"/>
<dbReference type="BioMuta" id="TTC39A"/>
<dbReference type="DMDM" id="74743633"/>
<dbReference type="jPOST" id="Q5SRH9"/>
<dbReference type="MassIVE" id="Q5SRH9"/>
<dbReference type="PaxDb" id="9606-ENSP00000393952"/>
<dbReference type="PeptideAtlas" id="Q5SRH9"/>
<dbReference type="ProteomicsDB" id="17678"/>
<dbReference type="ProteomicsDB" id="33736"/>
<dbReference type="ProteomicsDB" id="63849">
    <molecule id="Q5SRH9-1"/>
</dbReference>
<dbReference type="ProteomicsDB" id="63850">
    <molecule id="Q5SRH9-2"/>
</dbReference>
<dbReference type="ProteomicsDB" id="63851">
    <molecule id="Q5SRH9-3"/>
</dbReference>
<dbReference type="ProteomicsDB" id="63852">
    <molecule id="Q5SRH9-4"/>
</dbReference>
<dbReference type="Pumba" id="Q5SRH9"/>
<dbReference type="TopDownProteomics" id="Q5SRH9-1">
    <molecule id="Q5SRH9-1"/>
</dbReference>
<dbReference type="Antibodypedia" id="32939">
    <property type="antibodies" value="32 antibodies from 15 providers"/>
</dbReference>
<dbReference type="DNASU" id="22996"/>
<dbReference type="Ensembl" id="ENST00000262676.9">
    <molecule id="Q5SRH9-3"/>
    <property type="protein sequence ID" value="ENSP00000262676.5"/>
    <property type="gene ID" value="ENSG00000085831.16"/>
</dbReference>
<dbReference type="Ensembl" id="ENST00000371750.9">
    <molecule id="Q5SRH9-6"/>
    <property type="protein sequence ID" value="ENSP00000360815.5"/>
    <property type="gene ID" value="ENSG00000085831.16"/>
</dbReference>
<dbReference type="Ensembl" id="ENST00000413473.6">
    <molecule id="Q5SRH9-4"/>
    <property type="protein sequence ID" value="ENSP00000406144.2"/>
    <property type="gene ID" value="ENSG00000085831.16"/>
</dbReference>
<dbReference type="Ensembl" id="ENST00000447632.6">
    <molecule id="Q5SRH9-1"/>
    <property type="protein sequence ID" value="ENSP00000393952.2"/>
    <property type="gene ID" value="ENSG00000085831.16"/>
</dbReference>
<dbReference type="Ensembl" id="ENST00000530004.5">
    <molecule id="Q5SRH9-2"/>
    <property type="protein sequence ID" value="ENSP00000431228.1"/>
    <property type="gene ID" value="ENSG00000085831.16"/>
</dbReference>
<dbReference type="Ensembl" id="ENST00000680483.1">
    <molecule id="Q5SRH9-5"/>
    <property type="protein sequence ID" value="ENSP00000505859.1"/>
    <property type="gene ID" value="ENSG00000085831.16"/>
</dbReference>
<dbReference type="GeneID" id="22996"/>
<dbReference type="KEGG" id="hsa:22996"/>
<dbReference type="MANE-Select" id="ENST00000680483.1">
    <molecule id="Q5SRH9-5"/>
    <property type="protein sequence ID" value="ENSP00000505859.1"/>
    <property type="RefSeq nucleotide sequence ID" value="NM_001297663.2"/>
    <property type="RefSeq protein sequence ID" value="NP_001284592.1"/>
</dbReference>
<dbReference type="UCSC" id="uc001csj.4">
    <molecule id="Q5SRH9-1"/>
    <property type="organism name" value="human"/>
</dbReference>
<dbReference type="AGR" id="HGNC:18657"/>
<dbReference type="CTD" id="22996"/>
<dbReference type="DisGeNET" id="22996"/>
<dbReference type="GeneCards" id="TTC39A"/>
<dbReference type="HGNC" id="HGNC:18657">
    <property type="gene designation" value="TTC39A"/>
</dbReference>
<dbReference type="HPA" id="ENSG00000085831">
    <property type="expression patterns" value="Tissue enhanced (testis)"/>
</dbReference>
<dbReference type="MIM" id="619885">
    <property type="type" value="gene"/>
</dbReference>
<dbReference type="neXtProt" id="NX_Q5SRH9"/>
<dbReference type="OpenTargets" id="ENSG00000085831"/>
<dbReference type="PharmGKB" id="PA162407260"/>
<dbReference type="VEuPathDB" id="HostDB:ENSG00000085831"/>
<dbReference type="eggNOG" id="KOG3783">
    <property type="taxonomic scope" value="Eukaryota"/>
</dbReference>
<dbReference type="GeneTree" id="ENSGT00950000182917"/>
<dbReference type="HOGENOM" id="CLU_108974_0_0_1"/>
<dbReference type="InParanoid" id="Q5SRH9"/>
<dbReference type="OMA" id="GESHCHF"/>
<dbReference type="OrthoDB" id="43460at2759"/>
<dbReference type="PAN-GO" id="Q5SRH9">
    <property type="GO annotations" value="0 GO annotations based on evolutionary models"/>
</dbReference>
<dbReference type="PhylomeDB" id="Q5SRH9"/>
<dbReference type="TreeFam" id="TF313761"/>
<dbReference type="PathwayCommons" id="Q5SRH9"/>
<dbReference type="SignaLink" id="Q5SRH9"/>
<dbReference type="BioGRID-ORCS" id="22996">
    <property type="hits" value="15 hits in 1140 CRISPR screens"/>
</dbReference>
<dbReference type="ChiTaRS" id="TTC39A">
    <property type="organism name" value="human"/>
</dbReference>
<dbReference type="GeneWiki" id="Tetratricopeptide_Repeat_39A"/>
<dbReference type="GenomeRNAi" id="22996"/>
<dbReference type="Pharos" id="Q5SRH9">
    <property type="development level" value="Tdark"/>
</dbReference>
<dbReference type="PRO" id="PR:Q5SRH9"/>
<dbReference type="Proteomes" id="UP000005640">
    <property type="component" value="Chromosome 1"/>
</dbReference>
<dbReference type="RNAct" id="Q5SRH9">
    <property type="molecule type" value="protein"/>
</dbReference>
<dbReference type="Bgee" id="ENSG00000085831">
    <property type="expression patterns" value="Expressed in islet of Langerhans and 162 other cell types or tissues"/>
</dbReference>
<dbReference type="ExpressionAtlas" id="Q5SRH9">
    <property type="expression patterns" value="baseline and differential"/>
</dbReference>
<dbReference type="GO" id="GO:0005813">
    <property type="term" value="C:centrosome"/>
    <property type="evidence" value="ECO:0000314"/>
    <property type="project" value="HPA"/>
</dbReference>
<dbReference type="Gene3D" id="1.25.40.10">
    <property type="entry name" value="Tetratricopeptide repeat domain"/>
    <property type="match status" value="1"/>
</dbReference>
<dbReference type="InterPro" id="IPR019412">
    <property type="entry name" value="Iml2/TPR_39"/>
</dbReference>
<dbReference type="InterPro" id="IPR011990">
    <property type="entry name" value="TPR-like_helical_dom_sf"/>
</dbReference>
<dbReference type="InterPro" id="IPR019734">
    <property type="entry name" value="TPR_rpt"/>
</dbReference>
<dbReference type="PANTHER" id="PTHR31859">
    <property type="entry name" value="TETRATRICOPEPTIDE REPEAT PROTEIN 39 FAMILY MEMBER"/>
    <property type="match status" value="1"/>
</dbReference>
<dbReference type="PANTHER" id="PTHR31859:SF3">
    <property type="entry name" value="TETRATRICOPEPTIDE REPEAT PROTEIN 39A"/>
    <property type="match status" value="1"/>
</dbReference>
<dbReference type="Pfam" id="PF10300">
    <property type="entry name" value="Iml2-TPR_39"/>
    <property type="match status" value="2"/>
</dbReference>
<dbReference type="SMART" id="SM00028">
    <property type="entry name" value="TPR"/>
    <property type="match status" value="3"/>
</dbReference>
<dbReference type="SUPFAM" id="SSF81901">
    <property type="entry name" value="HCP-like"/>
    <property type="match status" value="1"/>
</dbReference>
<feature type="chain" id="PRO_0000291996" description="Tetratricopeptide repeat protein 39A">
    <location>
        <begin position="1"/>
        <end position="613"/>
    </location>
</feature>
<feature type="repeat" description="TPR 1">
    <location>
        <begin position="315"/>
        <end position="348"/>
    </location>
</feature>
<feature type="repeat" description="TPR 2">
    <location>
        <begin position="505"/>
        <end position="538"/>
    </location>
</feature>
<feature type="repeat" description="TPR 3">
    <location>
        <begin position="546"/>
        <end position="579"/>
    </location>
</feature>
<feature type="splice variant" id="VSP_026348" description="In isoform 2." evidence="2">
    <location>
        <begin position="1"/>
        <end position="392"/>
    </location>
</feature>
<feature type="splice variant" id="VSP_026349" description="In isoform 3." evidence="3">
    <original>MGQKGHKDSLYPCGG</original>
    <variation>MDSSPSLPLIR</variation>
    <location>
        <begin position="1"/>
        <end position="15"/>
    </location>
</feature>
<feature type="splice variant" id="VSP_026350" description="In isoform 4." evidence="2 4">
    <original>MGQKGHKDSLYPCGG</original>
    <variation>MAFLTTWKEAASGKSDRR</variation>
    <location>
        <begin position="1"/>
        <end position="15"/>
    </location>
</feature>
<feature type="splice variant" id="VSP_047198" description="In isoform 5." evidence="1">
    <original>MGQKGHKDSLYPCG</original>
    <variation>MTSAGGAPGALPA</variation>
    <location>
        <begin position="1"/>
        <end position="14"/>
    </location>
</feature>
<feature type="splice variant" id="VSP_026351" description="In isoform 4, isoform 5 and isoform 6." evidence="1 2 4">
    <location>
        <begin position="143"/>
        <end position="177"/>
    </location>
</feature>
<feature type="splice variant" id="VSP_026352" description="In isoform 3." evidence="3">
    <original>AIRRFEECCEAQQHWKQFHHMCYWELMWCFTYKGQWKMSYFYADLLSKENCWSKATYIYMKAAYLSMFGKEDHKPFGDDEVELFRAVPGLK</original>
    <variation>VSDGGPGRGWGSLGVSQTSRKSGTCDILRDRIDWGRGGGQERTNQRAGAGEALLAEQPGKTREEEAFVVPGILTGRYRTAALQWREVEGGA</variation>
    <location>
        <begin position="334"/>
        <end position="424"/>
    </location>
</feature>
<feature type="splice variant" id="VSP_026353" description="In isoform 3." evidence="3">
    <location>
        <begin position="425"/>
        <end position="613"/>
    </location>
</feature>
<feature type="sequence conflict" description="In Ref. 5; AAH28374." evidence="5" ref="5">
    <original>L</original>
    <variation>V</variation>
    <location>
        <position position="175"/>
    </location>
</feature>
<feature type="sequence conflict" description="In Ref. 2; BAH13518." evidence="5" ref="2">
    <original>F</original>
    <variation>L</variation>
    <location>
        <position position="338"/>
    </location>
</feature>
<keyword id="KW-0025">Alternative splicing</keyword>
<keyword id="KW-1267">Proteomics identification</keyword>
<keyword id="KW-1185">Reference proteome</keyword>
<keyword id="KW-0677">Repeat</keyword>
<keyword id="KW-0802">TPR repeat</keyword>
<organism>
    <name type="scientific">Homo sapiens</name>
    <name type="common">Human</name>
    <dbReference type="NCBI Taxonomy" id="9606"/>
    <lineage>
        <taxon>Eukaryota</taxon>
        <taxon>Metazoa</taxon>
        <taxon>Chordata</taxon>
        <taxon>Craniata</taxon>
        <taxon>Vertebrata</taxon>
        <taxon>Euteleostomi</taxon>
        <taxon>Mammalia</taxon>
        <taxon>Eutheria</taxon>
        <taxon>Euarchontoglires</taxon>
        <taxon>Primates</taxon>
        <taxon>Haplorrhini</taxon>
        <taxon>Catarrhini</taxon>
        <taxon>Hominidae</taxon>
        <taxon>Homo</taxon>
    </lineage>
</organism>
<evidence type="ECO:0000303" key="1">
    <source>
    </source>
</evidence>
<evidence type="ECO:0000303" key="2">
    <source>
    </source>
</evidence>
<evidence type="ECO:0000303" key="3">
    <source>
    </source>
</evidence>
<evidence type="ECO:0000303" key="4">
    <source>
    </source>
</evidence>
<evidence type="ECO:0000305" key="5"/>